<keyword id="KW-0010">Activator</keyword>
<keyword id="KW-0131">Cell cycle</keyword>
<keyword id="KW-0217">Developmental protein</keyword>
<keyword id="KW-0221">Differentiation</keyword>
<keyword id="KW-0238">DNA-binding</keyword>
<keyword id="KW-0517">Myogenesis</keyword>
<keyword id="KW-0539">Nucleus</keyword>
<keyword id="KW-0597">Phosphoprotein</keyword>
<keyword id="KW-1185">Reference proteome</keyword>
<keyword id="KW-0804">Transcription</keyword>
<keyword id="KW-0805">Transcription regulation</keyword>
<gene>
    <name type="primary">MYOG</name>
</gene>
<proteinExistence type="evidence at transcript level"/>
<sequence>MELYETSPYFYQEPHFYDGENYLPVHLQGFEPPGYERAELSLSPEARVPLEDKGLGPAEHCPGQCLPWACKVCKRKSVSVDRRRAATLREKRRLKKVNEAFEALKRSTLLNPNQRLPKVEILRSAIQYIERLQALLSSLNQEERDLRYRGGGGPQAAVPSECSSHSASCSPQWGSALEFGPNPGDHLLPADPTDAHNLHSLTSIVDSITVEDVAAAFPDETIPN</sequence>
<protein>
    <recommendedName>
        <fullName>Myogenin</fullName>
    </recommendedName>
</protein>
<reference key="1">
    <citation type="submission" date="2003-05" db="EMBL/GenBank/DDBJ databases">
        <title>Effect of myogenic regulatory factor siRNAs on differentiation of bovine skeletal muscle cells.</title>
        <authorList>
            <person name="Muroya S."/>
            <person name="Nakajima I."/>
            <person name="Chikuni K."/>
        </authorList>
    </citation>
    <scope>NUCLEOTIDE SEQUENCE [MRNA]</scope>
    <source>
        <tissue>Skeletal muscle</tissue>
    </source>
</reference>
<reference key="2">
    <citation type="submission" date="2006-04" db="EMBL/GenBank/DDBJ databases">
        <title>Gene expression of MRFs during development of skeletal muscle in Japanese black cattle.</title>
        <authorList>
            <person name="Shibata M."/>
            <person name="Matsumoto K."/>
            <person name="Aikawa K."/>
            <person name="Muramoto T."/>
            <person name="Fujimura S."/>
            <person name="Kadowaki M."/>
        </authorList>
    </citation>
    <scope>NUCLEOTIDE SEQUENCE [MRNA]</scope>
    <source>
        <strain>Japanese black</strain>
        <tissue>Skeletal muscle</tissue>
    </source>
</reference>
<reference key="3">
    <citation type="submission" date="2007-12" db="EMBL/GenBank/DDBJ databases">
        <title>Cloning and sequence analysis of the MYOG gene in cattle from China.</title>
        <authorList>
            <person name="Zhang Y.M."/>
            <person name="Li J."/>
            <person name="Zhong J.C."/>
        </authorList>
    </citation>
    <scope>NUCLEOTIDE SEQUENCE [GENOMIC DNA]</scope>
</reference>
<reference key="4">
    <citation type="submission" date="2006-06" db="EMBL/GenBank/DDBJ databases">
        <authorList>
            <consortium name="NIH - Mammalian Gene Collection (MGC) project"/>
        </authorList>
    </citation>
    <scope>NUCLEOTIDE SEQUENCE [LARGE SCALE MRNA]</scope>
    <source>
        <strain>Hereford</strain>
        <tissue>Fetal muscle</tissue>
    </source>
</reference>
<dbReference type="EMBL" id="AB110600">
    <property type="protein sequence ID" value="BAC76803.1"/>
    <property type="molecule type" value="mRNA"/>
</dbReference>
<dbReference type="EMBL" id="AB257560">
    <property type="protein sequence ID" value="BAE93440.1"/>
    <property type="molecule type" value="mRNA"/>
</dbReference>
<dbReference type="EMBL" id="EF636458">
    <property type="protein sequence ID" value="ABS12328.2"/>
    <property type="molecule type" value="Genomic_DNA"/>
</dbReference>
<dbReference type="EMBL" id="BC118336">
    <property type="protein sequence ID" value="AAI18337.1"/>
    <property type="molecule type" value="mRNA"/>
</dbReference>
<dbReference type="RefSeq" id="NP_001104795.1">
    <property type="nucleotide sequence ID" value="NM_001111325.1"/>
</dbReference>
<dbReference type="SMR" id="Q7YS81"/>
<dbReference type="FunCoup" id="Q7YS81">
    <property type="interactions" value="54"/>
</dbReference>
<dbReference type="STRING" id="9913.ENSBTAP00000007923"/>
<dbReference type="PaxDb" id="9913-ENSBTAP00000007923"/>
<dbReference type="Ensembl" id="ENSBTAT00000007923.7">
    <property type="protein sequence ID" value="ENSBTAP00000007923.5"/>
    <property type="gene ID" value="ENSBTAG00000006030.7"/>
</dbReference>
<dbReference type="GeneID" id="281343"/>
<dbReference type="KEGG" id="bta:281343"/>
<dbReference type="CTD" id="4656"/>
<dbReference type="VEuPathDB" id="HostDB:ENSBTAG00000006030"/>
<dbReference type="VGNC" id="VGNC:31837">
    <property type="gene designation" value="MYOG"/>
</dbReference>
<dbReference type="eggNOG" id="KOG3960">
    <property type="taxonomic scope" value="Eukaryota"/>
</dbReference>
<dbReference type="GeneTree" id="ENSGT00950000182959"/>
<dbReference type="HOGENOM" id="CLU_100258_0_0_1"/>
<dbReference type="InParanoid" id="Q7YS81"/>
<dbReference type="OMA" id="QELGGWW"/>
<dbReference type="OrthoDB" id="10049614at2759"/>
<dbReference type="TreeFam" id="TF316344"/>
<dbReference type="Reactome" id="R-BTA-525793">
    <property type="pathway name" value="Myogenesis"/>
</dbReference>
<dbReference type="Proteomes" id="UP000009136">
    <property type="component" value="Chromosome 16"/>
</dbReference>
<dbReference type="Bgee" id="ENSBTAG00000006030">
    <property type="expression patterns" value="Expressed in tongue muscle and 24 other cell types or tissues"/>
</dbReference>
<dbReference type="GO" id="GO:0005654">
    <property type="term" value="C:nucleoplasm"/>
    <property type="evidence" value="ECO:0007669"/>
    <property type="project" value="Ensembl"/>
</dbReference>
<dbReference type="GO" id="GO:0005634">
    <property type="term" value="C:nucleus"/>
    <property type="evidence" value="ECO:0000250"/>
    <property type="project" value="UniProtKB"/>
</dbReference>
<dbReference type="GO" id="GO:0032993">
    <property type="term" value="C:protein-DNA complex"/>
    <property type="evidence" value="ECO:0000250"/>
    <property type="project" value="UniProtKB"/>
</dbReference>
<dbReference type="GO" id="GO:0031490">
    <property type="term" value="F:chromatin DNA binding"/>
    <property type="evidence" value="ECO:0007669"/>
    <property type="project" value="Ensembl"/>
</dbReference>
<dbReference type="GO" id="GO:0001216">
    <property type="term" value="F:DNA-binding transcription activator activity"/>
    <property type="evidence" value="ECO:0000250"/>
    <property type="project" value="UniProtKB"/>
</dbReference>
<dbReference type="GO" id="GO:0001228">
    <property type="term" value="F:DNA-binding transcription activator activity, RNA polymerase II-specific"/>
    <property type="evidence" value="ECO:0007669"/>
    <property type="project" value="Ensembl"/>
</dbReference>
<dbReference type="GO" id="GO:0003700">
    <property type="term" value="F:DNA-binding transcription factor activity"/>
    <property type="evidence" value="ECO:0000250"/>
    <property type="project" value="UniProtKB"/>
</dbReference>
<dbReference type="GO" id="GO:0000981">
    <property type="term" value="F:DNA-binding transcription factor activity, RNA polymerase II-specific"/>
    <property type="evidence" value="ECO:0000318"/>
    <property type="project" value="GO_Central"/>
</dbReference>
<dbReference type="GO" id="GO:0070888">
    <property type="term" value="F:E-box binding"/>
    <property type="evidence" value="ECO:0000250"/>
    <property type="project" value="UniProtKB"/>
</dbReference>
<dbReference type="GO" id="GO:0046983">
    <property type="term" value="F:protein dimerization activity"/>
    <property type="evidence" value="ECO:0007669"/>
    <property type="project" value="InterPro"/>
</dbReference>
<dbReference type="GO" id="GO:0000978">
    <property type="term" value="F:RNA polymerase II cis-regulatory region sequence-specific DNA binding"/>
    <property type="evidence" value="ECO:0000318"/>
    <property type="project" value="GO_Central"/>
</dbReference>
<dbReference type="GO" id="GO:0071392">
    <property type="term" value="P:cellular response to estradiol stimulus"/>
    <property type="evidence" value="ECO:0000250"/>
    <property type="project" value="UniProtKB"/>
</dbReference>
<dbReference type="GO" id="GO:0071363">
    <property type="term" value="P:cellular response to growth factor stimulus"/>
    <property type="evidence" value="ECO:0007669"/>
    <property type="project" value="Ensembl"/>
</dbReference>
<dbReference type="GO" id="GO:0071285">
    <property type="term" value="P:cellular response to lithium ion"/>
    <property type="evidence" value="ECO:0007669"/>
    <property type="project" value="Ensembl"/>
</dbReference>
<dbReference type="GO" id="GO:0071356">
    <property type="term" value="P:cellular response to tumor necrosis factor"/>
    <property type="evidence" value="ECO:0007669"/>
    <property type="project" value="Ensembl"/>
</dbReference>
<dbReference type="GO" id="GO:0008285">
    <property type="term" value="P:negative regulation of cell population proliferation"/>
    <property type="evidence" value="ECO:0000250"/>
    <property type="project" value="UniProtKB"/>
</dbReference>
<dbReference type="GO" id="GO:0001503">
    <property type="term" value="P:ossification"/>
    <property type="evidence" value="ECO:0007669"/>
    <property type="project" value="Ensembl"/>
</dbReference>
<dbReference type="GO" id="GO:0014737">
    <property type="term" value="P:positive regulation of muscle atrophy"/>
    <property type="evidence" value="ECO:0000250"/>
    <property type="project" value="UniProtKB"/>
</dbReference>
<dbReference type="GO" id="GO:0045663">
    <property type="term" value="P:positive regulation of myoblast differentiation"/>
    <property type="evidence" value="ECO:0000250"/>
    <property type="project" value="UniProtKB"/>
</dbReference>
<dbReference type="GO" id="GO:0010831">
    <property type="term" value="P:positive regulation of myotube differentiation"/>
    <property type="evidence" value="ECO:0000250"/>
    <property type="project" value="UniProtKB"/>
</dbReference>
<dbReference type="GO" id="GO:0048743">
    <property type="term" value="P:positive regulation of skeletal muscle fiber development"/>
    <property type="evidence" value="ECO:0000250"/>
    <property type="project" value="UniProtKB"/>
</dbReference>
<dbReference type="GO" id="GO:0045944">
    <property type="term" value="P:positive regulation of transcription by RNA polymerase II"/>
    <property type="evidence" value="ECO:0000250"/>
    <property type="project" value="UniProtKB"/>
</dbReference>
<dbReference type="GO" id="GO:0051726">
    <property type="term" value="P:regulation of cell cycle"/>
    <property type="evidence" value="ECO:0000250"/>
    <property type="project" value="UniProtKB"/>
</dbReference>
<dbReference type="GO" id="GO:1901739">
    <property type="term" value="P:regulation of myoblast fusion"/>
    <property type="evidence" value="ECO:0000250"/>
    <property type="project" value="UniProtKB"/>
</dbReference>
<dbReference type="GO" id="GO:0014842">
    <property type="term" value="P:regulation of skeletal muscle satellite cell proliferation"/>
    <property type="evidence" value="ECO:0000250"/>
    <property type="project" value="UniProtKB"/>
</dbReference>
<dbReference type="GO" id="GO:0014894">
    <property type="term" value="P:response to denervation involved in regulation of muscle adaptation"/>
    <property type="evidence" value="ECO:0000250"/>
    <property type="project" value="UniProtKB"/>
</dbReference>
<dbReference type="GO" id="GO:0014878">
    <property type="term" value="P:response to electrical stimulus involved in regulation of muscle adaptation"/>
    <property type="evidence" value="ECO:0000250"/>
    <property type="project" value="UniProtKB"/>
</dbReference>
<dbReference type="GO" id="GO:0014873">
    <property type="term" value="P:response to muscle activity involved in regulation of muscle adaptation"/>
    <property type="evidence" value="ECO:0000250"/>
    <property type="project" value="UniProtKB"/>
</dbReference>
<dbReference type="GO" id="GO:0035914">
    <property type="term" value="P:skeletal muscle cell differentiation"/>
    <property type="evidence" value="ECO:0000318"/>
    <property type="project" value="GO_Central"/>
</dbReference>
<dbReference type="GO" id="GO:0048741">
    <property type="term" value="P:skeletal muscle fiber development"/>
    <property type="evidence" value="ECO:0007669"/>
    <property type="project" value="Ensembl"/>
</dbReference>
<dbReference type="GO" id="GO:0014891">
    <property type="term" value="P:striated muscle atrophy"/>
    <property type="evidence" value="ECO:0000250"/>
    <property type="project" value="UniProtKB"/>
</dbReference>
<dbReference type="CDD" id="cd18935">
    <property type="entry name" value="bHLH_TS_MYOG_Myf4"/>
    <property type="match status" value="1"/>
</dbReference>
<dbReference type="FunFam" id="4.10.280.10:FF:000005">
    <property type="entry name" value="Myogenic factor"/>
    <property type="match status" value="1"/>
</dbReference>
<dbReference type="Gene3D" id="4.10.280.10">
    <property type="entry name" value="Helix-loop-helix DNA-binding domain"/>
    <property type="match status" value="1"/>
</dbReference>
<dbReference type="InterPro" id="IPR011598">
    <property type="entry name" value="bHLH_dom"/>
</dbReference>
<dbReference type="InterPro" id="IPR036638">
    <property type="entry name" value="HLH_DNA-bd_sf"/>
</dbReference>
<dbReference type="InterPro" id="IPR002546">
    <property type="entry name" value="MyoD_N"/>
</dbReference>
<dbReference type="InterPro" id="IPR039704">
    <property type="entry name" value="Myogenic_factor"/>
</dbReference>
<dbReference type="PANTHER" id="PTHR11534">
    <property type="entry name" value="MYOGENIC FACTOR"/>
    <property type="match status" value="1"/>
</dbReference>
<dbReference type="PANTHER" id="PTHR11534:SF5">
    <property type="entry name" value="MYOGENIN"/>
    <property type="match status" value="1"/>
</dbReference>
<dbReference type="Pfam" id="PF01586">
    <property type="entry name" value="Basic"/>
    <property type="match status" value="1"/>
</dbReference>
<dbReference type="Pfam" id="PF00010">
    <property type="entry name" value="HLH"/>
    <property type="match status" value="1"/>
</dbReference>
<dbReference type="SMART" id="SM00520">
    <property type="entry name" value="BASIC"/>
    <property type="match status" value="1"/>
</dbReference>
<dbReference type="SMART" id="SM00353">
    <property type="entry name" value="HLH"/>
    <property type="match status" value="1"/>
</dbReference>
<dbReference type="SUPFAM" id="SSF47459">
    <property type="entry name" value="HLH, helix-loop-helix DNA-binding domain"/>
    <property type="match status" value="1"/>
</dbReference>
<dbReference type="PROSITE" id="PS50888">
    <property type="entry name" value="BHLH"/>
    <property type="match status" value="1"/>
</dbReference>
<organism>
    <name type="scientific">Bos taurus</name>
    <name type="common">Bovine</name>
    <dbReference type="NCBI Taxonomy" id="9913"/>
    <lineage>
        <taxon>Eukaryota</taxon>
        <taxon>Metazoa</taxon>
        <taxon>Chordata</taxon>
        <taxon>Craniata</taxon>
        <taxon>Vertebrata</taxon>
        <taxon>Euteleostomi</taxon>
        <taxon>Mammalia</taxon>
        <taxon>Eutheria</taxon>
        <taxon>Laurasiatheria</taxon>
        <taxon>Artiodactyla</taxon>
        <taxon>Ruminantia</taxon>
        <taxon>Pecora</taxon>
        <taxon>Bovidae</taxon>
        <taxon>Bovinae</taxon>
        <taxon>Bos</taxon>
    </lineage>
</organism>
<accession>Q7YS81</accession>
<accession>A7L032</accession>
<accession>Q148H1</accession>
<accession>Q1MW35</accession>
<evidence type="ECO:0000250" key="1"/>
<evidence type="ECO:0000250" key="2">
    <source>
        <dbReference type="UniProtKB" id="P20428"/>
    </source>
</evidence>
<evidence type="ECO:0000255" key="3">
    <source>
        <dbReference type="PROSITE-ProRule" id="PRU00981"/>
    </source>
</evidence>
<evidence type="ECO:0000305" key="4"/>
<name>MYOG_BOVIN</name>
<feature type="chain" id="PRO_0000244386" description="Myogenin">
    <location>
        <begin position="1"/>
        <end position="224"/>
    </location>
</feature>
<feature type="domain" description="bHLH" evidence="3">
    <location>
        <begin position="81"/>
        <end position="132"/>
    </location>
</feature>
<feature type="modified residue" description="Phosphoserine; by CaMK2G" evidence="2">
    <location>
        <position position="77"/>
    </location>
</feature>
<feature type="modified residue" description="Phosphoserine; by CaMK2G" evidence="2">
    <location>
        <position position="79"/>
    </location>
</feature>
<feature type="modified residue" description="Phosphothreonine; by CaMK2G" evidence="2">
    <location>
        <position position="87"/>
    </location>
</feature>
<feature type="sequence conflict" description="In Ref. 1; BAC76803." evidence="4" ref="1">
    <original>E</original>
    <variation>K</variation>
    <location>
        <position position="36"/>
    </location>
</feature>
<feature type="sequence conflict" description="In Ref. 1; BAC76803." evidence="4" ref="1">
    <original>AFE</original>
    <variation>GFQ</variation>
    <location>
        <begin position="100"/>
        <end position="102"/>
    </location>
</feature>
<feature type="sequence conflict" description="In Ref. 4; AAI18337." evidence="4" ref="4">
    <original>A</original>
    <variation>P</variation>
    <location>
        <position position="156"/>
    </location>
</feature>
<feature type="sequence conflict" description="In Ref. 2; BAE93440." evidence="4" ref="2">
    <original>S</original>
    <variation>N</variation>
    <location>
        <position position="200"/>
    </location>
</feature>
<comment type="function">
    <text evidence="1">Acts as a transcriptional activator that promotes transcription of muscle-specific target genes and plays a role in muscle differentiation, cell cycle exit and muscle atrophy. Essential for the development of functional embryonic skeletal fiber muscle differentiation. However is dispensable for postnatal skeletal muscle growth; phosphorylation by CAMK2G inhibits its transcriptional activity in respons to muscle activity. Required for the recruitment of the FACT complex to muscle-specific promoter regions, thus promoting gene expression initiation. During terminal myoblast differentiation, plays a role as a strong activator of transcription at loci with an open chromatin structure previously initiated by MYOD1. Together with MYF5 and MYOD1, co-occupies muscle-specific gene promoter core regions during myogenesis. Also cooperates with myocyte-specific enhancer factor MEF2D and BRG1-dependent recruitment of SWI/SNF chromatin-remodeling enzymes to alter chromatin structure at myogenic late gene promoters. Facilitates cell cycle exit during terminal muscle differentiation through the up-regulation of miR-20a expression, which in turn represses genes involved in cell cycle progression. Binds to the E-box containing (E1) promoter region of the miR-20a gene. Also plays a role in preventing reversal of muscle cell differentiation. Contributes to the atrophy-related gene expression in adult denervated muscles. Induces fibroblasts to differentiate into myoblasts (By similarity).</text>
</comment>
<comment type="subunit">
    <text evidence="1 2">Homodimer and heterodimer with E12; heterodimerization enhances MYOG DNA-binding and transcriptional activities. Interacts with SMARCA4/BRG1/BAF190A. Interacts (via C-terminal region) with SSRP1 and SUPT16H; the interaction is indicative of an interaction with the FACT complex. Interacts with CSRP3 (By similarity).</text>
</comment>
<comment type="subcellular location">
    <subcellularLocation>
        <location evidence="3">Nucleus</location>
    </subcellularLocation>
    <text evidence="1">Recruited to late myogenic gene promoter regulatory sequences with SMARCA4/BRG1/BAF190A and SWI/SNF chromatin-remodeling enzymes to promote chromatin-remodeling and transcription initiation in developing embryos.</text>
</comment>
<comment type="PTM">
    <text evidence="1">Phosphorylated by CAMK2G on threonine and serine amino acids in a muscle activity-dependent manner. Phosphorylation of Thr-87 impairs both DNA-binding and trans-activation functions in contracting muscles (By similarity).</text>
</comment>